<comment type="similarity">
    <text evidence="1">Belongs to the UPF0235 family.</text>
</comment>
<feature type="chain" id="PRO_1000061428" description="UPF0235 protein Swol_0959">
    <location>
        <begin position="1"/>
        <end position="102"/>
    </location>
</feature>
<protein>
    <recommendedName>
        <fullName evidence="1">UPF0235 protein Swol_0959</fullName>
    </recommendedName>
</protein>
<organism>
    <name type="scientific">Syntrophomonas wolfei subsp. wolfei (strain DSM 2245B / Goettingen)</name>
    <dbReference type="NCBI Taxonomy" id="335541"/>
    <lineage>
        <taxon>Bacteria</taxon>
        <taxon>Bacillati</taxon>
        <taxon>Bacillota</taxon>
        <taxon>Clostridia</taxon>
        <taxon>Eubacteriales</taxon>
        <taxon>Syntrophomonadaceae</taxon>
        <taxon>Syntrophomonas</taxon>
    </lineage>
</organism>
<sequence length="102" mass="11638">MNKPLIRTERNGDWLRFGVKVQPRSSRNQIVGEHEGDLKIKVMAPPVEGAANQALQKFLAELFKLPKKDIRIVRGETSRHKIVEIRGIEAEKLLAFIPQITK</sequence>
<evidence type="ECO:0000255" key="1">
    <source>
        <dbReference type="HAMAP-Rule" id="MF_00634"/>
    </source>
</evidence>
<name>Y959_SYNWW</name>
<proteinExistence type="inferred from homology"/>
<gene>
    <name type="ordered locus">Swol_0959</name>
</gene>
<reference key="1">
    <citation type="journal article" date="2010" name="Environ. Microbiol.">
        <title>The genome of Syntrophomonas wolfei: new insights into syntrophic metabolism and biohydrogen production.</title>
        <authorList>
            <person name="Sieber J.R."/>
            <person name="Sims D.R."/>
            <person name="Han C."/>
            <person name="Kim E."/>
            <person name="Lykidis A."/>
            <person name="Lapidus A.L."/>
            <person name="McDonnald E."/>
            <person name="Rohlin L."/>
            <person name="Culley D.E."/>
            <person name="Gunsalus R."/>
            <person name="McInerney M.J."/>
        </authorList>
    </citation>
    <scope>NUCLEOTIDE SEQUENCE [LARGE SCALE GENOMIC DNA]</scope>
    <source>
        <strain>DSM 2245B / Goettingen</strain>
    </source>
</reference>
<keyword id="KW-1185">Reference proteome</keyword>
<accession>Q0AYD0</accession>
<dbReference type="EMBL" id="CP000448">
    <property type="protein sequence ID" value="ABI68274.1"/>
    <property type="molecule type" value="Genomic_DNA"/>
</dbReference>
<dbReference type="RefSeq" id="WP_011640379.1">
    <property type="nucleotide sequence ID" value="NC_008346.1"/>
</dbReference>
<dbReference type="SMR" id="Q0AYD0"/>
<dbReference type="STRING" id="335541.Swol_0959"/>
<dbReference type="KEGG" id="swo:Swol_0959"/>
<dbReference type="eggNOG" id="COG1872">
    <property type="taxonomic scope" value="Bacteria"/>
</dbReference>
<dbReference type="HOGENOM" id="CLU_130694_6_0_9"/>
<dbReference type="OrthoDB" id="9800587at2"/>
<dbReference type="Proteomes" id="UP000001968">
    <property type="component" value="Chromosome"/>
</dbReference>
<dbReference type="GO" id="GO:0005737">
    <property type="term" value="C:cytoplasm"/>
    <property type="evidence" value="ECO:0007669"/>
    <property type="project" value="TreeGrafter"/>
</dbReference>
<dbReference type="Gene3D" id="3.30.1200.10">
    <property type="entry name" value="YggU-like"/>
    <property type="match status" value="1"/>
</dbReference>
<dbReference type="HAMAP" id="MF_00634">
    <property type="entry name" value="UPF0235"/>
    <property type="match status" value="1"/>
</dbReference>
<dbReference type="InterPro" id="IPR003746">
    <property type="entry name" value="DUF167"/>
</dbReference>
<dbReference type="InterPro" id="IPR036591">
    <property type="entry name" value="YggU-like_sf"/>
</dbReference>
<dbReference type="NCBIfam" id="TIGR00251">
    <property type="entry name" value="DUF167 family protein"/>
    <property type="match status" value="1"/>
</dbReference>
<dbReference type="PANTHER" id="PTHR13420">
    <property type="entry name" value="UPF0235 PROTEIN C15ORF40"/>
    <property type="match status" value="1"/>
</dbReference>
<dbReference type="PANTHER" id="PTHR13420:SF7">
    <property type="entry name" value="UPF0235 PROTEIN C15ORF40"/>
    <property type="match status" value="1"/>
</dbReference>
<dbReference type="Pfam" id="PF02594">
    <property type="entry name" value="DUF167"/>
    <property type="match status" value="1"/>
</dbReference>
<dbReference type="SMART" id="SM01152">
    <property type="entry name" value="DUF167"/>
    <property type="match status" value="1"/>
</dbReference>
<dbReference type="SUPFAM" id="SSF69786">
    <property type="entry name" value="YggU-like"/>
    <property type="match status" value="1"/>
</dbReference>